<organism>
    <name type="scientific">Photorhabdus laumondii subsp. laumondii (strain DSM 15139 / CIP 105565 / TT01)</name>
    <name type="common">Photorhabdus luminescens subsp. laumondii</name>
    <dbReference type="NCBI Taxonomy" id="243265"/>
    <lineage>
        <taxon>Bacteria</taxon>
        <taxon>Pseudomonadati</taxon>
        <taxon>Pseudomonadota</taxon>
        <taxon>Gammaproteobacteria</taxon>
        <taxon>Enterobacterales</taxon>
        <taxon>Morganellaceae</taxon>
        <taxon>Photorhabdus</taxon>
    </lineage>
</organism>
<keyword id="KW-0012">Acyltransferase</keyword>
<keyword id="KW-0963">Cytoplasm</keyword>
<keyword id="KW-1185">Reference proteome</keyword>
<keyword id="KW-0808">Transferase</keyword>
<comment type="function">
    <text evidence="1">Catalyzes the transfer of endogenously produced octanoic acid from octanoyl-acyl-carrier-protein onto the lipoyl domains of lipoate-dependent enzymes. Lipoyl-ACP can also act as a substrate although octanoyl-ACP is likely to be the physiological substrate.</text>
</comment>
<comment type="catalytic activity">
    <reaction evidence="1">
        <text>octanoyl-[ACP] + L-lysyl-[protein] = N(6)-octanoyl-L-lysyl-[protein] + holo-[ACP] + H(+)</text>
        <dbReference type="Rhea" id="RHEA:17665"/>
        <dbReference type="Rhea" id="RHEA-COMP:9636"/>
        <dbReference type="Rhea" id="RHEA-COMP:9685"/>
        <dbReference type="Rhea" id="RHEA-COMP:9752"/>
        <dbReference type="Rhea" id="RHEA-COMP:9928"/>
        <dbReference type="ChEBI" id="CHEBI:15378"/>
        <dbReference type="ChEBI" id="CHEBI:29969"/>
        <dbReference type="ChEBI" id="CHEBI:64479"/>
        <dbReference type="ChEBI" id="CHEBI:78463"/>
        <dbReference type="ChEBI" id="CHEBI:78809"/>
        <dbReference type="EC" id="2.3.1.181"/>
    </reaction>
</comment>
<comment type="pathway">
    <text evidence="1">Protein modification; protein lipoylation via endogenous pathway; protein N(6)-(lipoyl)lysine from octanoyl-[acyl-carrier-protein]: step 1/2.</text>
</comment>
<comment type="subcellular location">
    <subcellularLocation>
        <location evidence="1">Cytoplasm</location>
    </subcellularLocation>
</comment>
<comment type="miscellaneous">
    <text evidence="1">In the reaction, the free carboxyl group of octanoic acid is attached via an amide linkage to the epsilon-amino group of a specific lysine residue of lipoyl domains of lipoate-dependent enzymes.</text>
</comment>
<comment type="similarity">
    <text evidence="1">Belongs to the LipB family.</text>
</comment>
<comment type="sequence caution" evidence="3">
    <conflict type="erroneous initiation">
        <sequence resource="EMBL-CDS" id="CAE13586"/>
    </conflict>
    <text>Extended N-terminus.</text>
</comment>
<name>LIPB_PHOLL</name>
<evidence type="ECO:0000255" key="1">
    <source>
        <dbReference type="HAMAP-Rule" id="MF_00013"/>
    </source>
</evidence>
<evidence type="ECO:0000255" key="2">
    <source>
        <dbReference type="PROSITE-ProRule" id="PRU01067"/>
    </source>
</evidence>
<evidence type="ECO:0000305" key="3"/>
<dbReference type="EC" id="2.3.1.181" evidence="1"/>
<dbReference type="EMBL" id="BX571863">
    <property type="protein sequence ID" value="CAE13586.1"/>
    <property type="status" value="ALT_INIT"/>
    <property type="molecule type" value="Genomic_DNA"/>
</dbReference>
<dbReference type="RefSeq" id="WP_041379981.1">
    <property type="nucleotide sequence ID" value="NC_005126.1"/>
</dbReference>
<dbReference type="SMR" id="Q7N766"/>
<dbReference type="STRING" id="243265.plu1292"/>
<dbReference type="GeneID" id="48847570"/>
<dbReference type="KEGG" id="plu:plu1292"/>
<dbReference type="eggNOG" id="COG0321">
    <property type="taxonomic scope" value="Bacteria"/>
</dbReference>
<dbReference type="HOGENOM" id="CLU_035168_3_1_6"/>
<dbReference type="OrthoDB" id="9787061at2"/>
<dbReference type="UniPathway" id="UPA00538">
    <property type="reaction ID" value="UER00592"/>
</dbReference>
<dbReference type="Proteomes" id="UP000002514">
    <property type="component" value="Chromosome"/>
</dbReference>
<dbReference type="GO" id="GO:0005737">
    <property type="term" value="C:cytoplasm"/>
    <property type="evidence" value="ECO:0007669"/>
    <property type="project" value="UniProtKB-SubCell"/>
</dbReference>
<dbReference type="GO" id="GO:0033819">
    <property type="term" value="F:lipoyl(octanoyl) transferase activity"/>
    <property type="evidence" value="ECO:0007669"/>
    <property type="project" value="UniProtKB-EC"/>
</dbReference>
<dbReference type="GO" id="GO:0036211">
    <property type="term" value="P:protein modification process"/>
    <property type="evidence" value="ECO:0007669"/>
    <property type="project" value="InterPro"/>
</dbReference>
<dbReference type="CDD" id="cd16444">
    <property type="entry name" value="LipB"/>
    <property type="match status" value="1"/>
</dbReference>
<dbReference type="FunFam" id="3.30.930.10:FF:000020">
    <property type="entry name" value="Octanoyltransferase"/>
    <property type="match status" value="1"/>
</dbReference>
<dbReference type="Gene3D" id="3.30.930.10">
    <property type="entry name" value="Bira Bifunctional Protein, Domain 2"/>
    <property type="match status" value="1"/>
</dbReference>
<dbReference type="HAMAP" id="MF_00013">
    <property type="entry name" value="LipB"/>
    <property type="match status" value="1"/>
</dbReference>
<dbReference type="InterPro" id="IPR045864">
    <property type="entry name" value="aa-tRNA-synth_II/BPL/LPL"/>
</dbReference>
<dbReference type="InterPro" id="IPR004143">
    <property type="entry name" value="BPL_LPL_catalytic"/>
</dbReference>
<dbReference type="InterPro" id="IPR000544">
    <property type="entry name" value="Octanoyltransferase"/>
</dbReference>
<dbReference type="InterPro" id="IPR020605">
    <property type="entry name" value="Octanoyltransferase_CS"/>
</dbReference>
<dbReference type="NCBIfam" id="TIGR00214">
    <property type="entry name" value="lipB"/>
    <property type="match status" value="1"/>
</dbReference>
<dbReference type="NCBIfam" id="NF010922">
    <property type="entry name" value="PRK14342.1"/>
    <property type="match status" value="1"/>
</dbReference>
<dbReference type="PANTHER" id="PTHR10993:SF7">
    <property type="entry name" value="LIPOYLTRANSFERASE 2, MITOCHONDRIAL-RELATED"/>
    <property type="match status" value="1"/>
</dbReference>
<dbReference type="PANTHER" id="PTHR10993">
    <property type="entry name" value="OCTANOYLTRANSFERASE"/>
    <property type="match status" value="1"/>
</dbReference>
<dbReference type="Pfam" id="PF21948">
    <property type="entry name" value="LplA-B_cat"/>
    <property type="match status" value="1"/>
</dbReference>
<dbReference type="PIRSF" id="PIRSF016262">
    <property type="entry name" value="LPLase"/>
    <property type="match status" value="1"/>
</dbReference>
<dbReference type="SUPFAM" id="SSF55681">
    <property type="entry name" value="Class II aaRS and biotin synthetases"/>
    <property type="match status" value="1"/>
</dbReference>
<dbReference type="PROSITE" id="PS51733">
    <property type="entry name" value="BPL_LPL_CATALYTIC"/>
    <property type="match status" value="1"/>
</dbReference>
<dbReference type="PROSITE" id="PS01313">
    <property type="entry name" value="LIPB"/>
    <property type="match status" value="1"/>
</dbReference>
<gene>
    <name evidence="1" type="primary">lipB</name>
    <name type="ordered locus">plu1292</name>
</gene>
<proteinExistence type="inferred from homology"/>
<reference key="1">
    <citation type="journal article" date="2003" name="Nat. Biotechnol.">
        <title>The genome sequence of the entomopathogenic bacterium Photorhabdus luminescens.</title>
        <authorList>
            <person name="Duchaud E."/>
            <person name="Rusniok C."/>
            <person name="Frangeul L."/>
            <person name="Buchrieser C."/>
            <person name="Givaudan A."/>
            <person name="Taourit S."/>
            <person name="Bocs S."/>
            <person name="Boursaux-Eude C."/>
            <person name="Chandler M."/>
            <person name="Charles J.-F."/>
            <person name="Dassa E."/>
            <person name="Derose R."/>
            <person name="Derzelle S."/>
            <person name="Freyssinet G."/>
            <person name="Gaudriault S."/>
            <person name="Medigue C."/>
            <person name="Lanois A."/>
            <person name="Powell K."/>
            <person name="Siguier P."/>
            <person name="Vincent R."/>
            <person name="Wingate V."/>
            <person name="Zouine M."/>
            <person name="Glaser P."/>
            <person name="Boemare N."/>
            <person name="Danchin A."/>
            <person name="Kunst F."/>
        </authorList>
    </citation>
    <scope>NUCLEOTIDE SEQUENCE [LARGE SCALE GENOMIC DNA]</scope>
    <source>
        <strain>DSM 15139 / CIP 105565 / TT01</strain>
    </source>
</reference>
<sequence length="213" mass="23826">MKFQLQHKTIFLRQLGIQPYEPISDAMHLFTEQRDTNTPDEIWLVQHPKVFTQGQAGKAEHLLSLGDIPVIQSDRGGQVTYHGPGQQVMYVMIDIKRARIGVRQLVTAIEDTVIKTLAHFGVKAYARPDAPGVYVNEAKICSLGLRIRKGCSFHGLALNIAMDLEPFQRINPCGYAGMKMIQLSDLVPGITVEQVQPVLVEKFCQQLGFKLNS</sequence>
<feature type="chain" id="PRO_0000062859" description="Octanoyltransferase">
    <location>
        <begin position="1"/>
        <end position="213"/>
    </location>
</feature>
<feature type="domain" description="BPL/LPL catalytic" evidence="2">
    <location>
        <begin position="36"/>
        <end position="211"/>
    </location>
</feature>
<feature type="active site" description="Acyl-thioester intermediate" evidence="1">
    <location>
        <position position="173"/>
    </location>
</feature>
<feature type="binding site" evidence="1">
    <location>
        <begin position="75"/>
        <end position="82"/>
    </location>
    <ligand>
        <name>substrate</name>
    </ligand>
</feature>
<feature type="binding site" evidence="1">
    <location>
        <begin position="142"/>
        <end position="144"/>
    </location>
    <ligand>
        <name>substrate</name>
    </ligand>
</feature>
<feature type="binding site" evidence="1">
    <location>
        <begin position="155"/>
        <end position="157"/>
    </location>
    <ligand>
        <name>substrate</name>
    </ligand>
</feature>
<feature type="site" description="Lowers pKa of active site Cys" evidence="1">
    <location>
        <position position="139"/>
    </location>
</feature>
<accession>Q7N766</accession>
<protein>
    <recommendedName>
        <fullName evidence="1">Octanoyltransferase</fullName>
        <ecNumber evidence="1">2.3.1.181</ecNumber>
    </recommendedName>
    <alternativeName>
        <fullName evidence="1">Lipoate-protein ligase B</fullName>
    </alternativeName>
    <alternativeName>
        <fullName evidence="1">Lipoyl/octanoyl transferase</fullName>
    </alternativeName>
    <alternativeName>
        <fullName evidence="1">Octanoyl-[acyl-carrier-protein]-protein N-octanoyltransferase</fullName>
    </alternativeName>
</protein>